<accession>Q0AKX7</accession>
<feature type="chain" id="PRO_0000270684" description="Large ribosomal subunit protein bL21">
    <location>
        <begin position="1"/>
        <end position="223"/>
    </location>
</feature>
<feature type="region of interest" description="Disordered" evidence="2">
    <location>
        <begin position="110"/>
        <end position="149"/>
    </location>
</feature>
<feature type="compositionally biased region" description="Basic and acidic residues" evidence="2">
    <location>
        <begin position="133"/>
        <end position="147"/>
    </location>
</feature>
<proteinExistence type="inferred from homology"/>
<keyword id="KW-1185">Reference proteome</keyword>
<keyword id="KW-0687">Ribonucleoprotein</keyword>
<keyword id="KW-0689">Ribosomal protein</keyword>
<keyword id="KW-0694">RNA-binding</keyword>
<keyword id="KW-0699">rRNA-binding</keyword>
<protein>
    <recommendedName>
        <fullName evidence="1">Large ribosomal subunit protein bL21</fullName>
    </recommendedName>
    <alternativeName>
        <fullName evidence="3">50S ribosomal protein L21</fullName>
    </alternativeName>
</protein>
<name>RL21_MARMM</name>
<reference key="1">
    <citation type="submission" date="2006-08" db="EMBL/GenBank/DDBJ databases">
        <title>Complete sequence of Maricaulis maris MCS10.</title>
        <authorList>
            <consortium name="US DOE Joint Genome Institute"/>
            <person name="Copeland A."/>
            <person name="Lucas S."/>
            <person name="Lapidus A."/>
            <person name="Barry K."/>
            <person name="Detter J.C."/>
            <person name="Glavina del Rio T."/>
            <person name="Hammon N."/>
            <person name="Israni S."/>
            <person name="Dalin E."/>
            <person name="Tice H."/>
            <person name="Pitluck S."/>
            <person name="Saunders E."/>
            <person name="Brettin T."/>
            <person name="Bruce D."/>
            <person name="Han C."/>
            <person name="Tapia R."/>
            <person name="Gilna P."/>
            <person name="Schmutz J."/>
            <person name="Larimer F."/>
            <person name="Land M."/>
            <person name="Hauser L."/>
            <person name="Kyrpides N."/>
            <person name="Mikhailova N."/>
            <person name="Viollier P."/>
            <person name="Stephens C."/>
            <person name="Richardson P."/>
        </authorList>
    </citation>
    <scope>NUCLEOTIDE SEQUENCE [LARGE SCALE GENOMIC DNA]</scope>
    <source>
        <strain>MCS10</strain>
    </source>
</reference>
<evidence type="ECO:0000255" key="1">
    <source>
        <dbReference type="HAMAP-Rule" id="MF_01363"/>
    </source>
</evidence>
<evidence type="ECO:0000256" key="2">
    <source>
        <dbReference type="SAM" id="MobiDB-lite"/>
    </source>
</evidence>
<evidence type="ECO:0000305" key="3"/>
<gene>
    <name evidence="1" type="primary">rplU</name>
    <name type="ordered locus">Mmar10_2784</name>
</gene>
<sequence length="223" mass="23247">MFAVIKTGGKQYRVAAGDEIRIEKLEGAAGDTLDLGDVLMLGSEAGVTVGSPTIDGAQVIGELLDTNRARKIIVFKKRRRQNYRRTKGHRQWGTVVRIAEIVAPGEKAKTALKSTTAEPKAADAPKAKAKAAPKAEKAAAPKAEKAPAKKAAAPKAAAADALTELTGVGPALATKLNEAGITTFAQVAAWTEADLDALSETITGLKAKAEKNDWINAAKALAK</sequence>
<organism>
    <name type="scientific">Maricaulis maris (strain MCS10)</name>
    <name type="common">Caulobacter maris</name>
    <dbReference type="NCBI Taxonomy" id="394221"/>
    <lineage>
        <taxon>Bacteria</taxon>
        <taxon>Pseudomonadati</taxon>
        <taxon>Pseudomonadota</taxon>
        <taxon>Alphaproteobacteria</taxon>
        <taxon>Maricaulales</taxon>
        <taxon>Maricaulaceae</taxon>
        <taxon>Maricaulis</taxon>
    </lineage>
</organism>
<comment type="function">
    <text evidence="1">This protein binds to 23S rRNA in the presence of protein L20.</text>
</comment>
<comment type="subunit">
    <text evidence="1">Part of the 50S ribosomal subunit. Contacts protein L20.</text>
</comment>
<comment type="similarity">
    <text evidence="1">Belongs to the bacterial ribosomal protein bL21 family.</text>
</comment>
<dbReference type="EMBL" id="CP000449">
    <property type="protein sequence ID" value="ABI67066.1"/>
    <property type="molecule type" value="Genomic_DNA"/>
</dbReference>
<dbReference type="RefSeq" id="WP_011644710.1">
    <property type="nucleotide sequence ID" value="NC_008347.1"/>
</dbReference>
<dbReference type="SMR" id="Q0AKX7"/>
<dbReference type="STRING" id="394221.Mmar10_2784"/>
<dbReference type="KEGG" id="mmr:Mmar10_2784"/>
<dbReference type="eggNOG" id="COG0261">
    <property type="taxonomic scope" value="Bacteria"/>
</dbReference>
<dbReference type="eggNOG" id="COG3743">
    <property type="taxonomic scope" value="Bacteria"/>
</dbReference>
<dbReference type="HOGENOM" id="CLU_061463_1_0_5"/>
<dbReference type="OrthoDB" id="9813334at2"/>
<dbReference type="Proteomes" id="UP000001964">
    <property type="component" value="Chromosome"/>
</dbReference>
<dbReference type="GO" id="GO:0005737">
    <property type="term" value="C:cytoplasm"/>
    <property type="evidence" value="ECO:0007669"/>
    <property type="project" value="UniProtKB-ARBA"/>
</dbReference>
<dbReference type="GO" id="GO:1990904">
    <property type="term" value="C:ribonucleoprotein complex"/>
    <property type="evidence" value="ECO:0007669"/>
    <property type="project" value="UniProtKB-KW"/>
</dbReference>
<dbReference type="GO" id="GO:0005840">
    <property type="term" value="C:ribosome"/>
    <property type="evidence" value="ECO:0007669"/>
    <property type="project" value="UniProtKB-KW"/>
</dbReference>
<dbReference type="GO" id="GO:0000166">
    <property type="term" value="F:nucleotide binding"/>
    <property type="evidence" value="ECO:0007669"/>
    <property type="project" value="InterPro"/>
</dbReference>
<dbReference type="GO" id="GO:0019843">
    <property type="term" value="F:rRNA binding"/>
    <property type="evidence" value="ECO:0007669"/>
    <property type="project" value="UniProtKB-UniRule"/>
</dbReference>
<dbReference type="GO" id="GO:0003735">
    <property type="term" value="F:structural constituent of ribosome"/>
    <property type="evidence" value="ECO:0007669"/>
    <property type="project" value="InterPro"/>
</dbReference>
<dbReference type="GO" id="GO:0006412">
    <property type="term" value="P:translation"/>
    <property type="evidence" value="ECO:0007669"/>
    <property type="project" value="UniProtKB-UniRule"/>
</dbReference>
<dbReference type="Gene3D" id="1.10.150.20">
    <property type="entry name" value="5' to 3' exonuclease, C-terminal subdomain"/>
    <property type="match status" value="1"/>
</dbReference>
<dbReference type="HAMAP" id="MF_01363">
    <property type="entry name" value="Ribosomal_bL21"/>
    <property type="match status" value="1"/>
</dbReference>
<dbReference type="InterPro" id="IPR028909">
    <property type="entry name" value="bL21-like"/>
</dbReference>
<dbReference type="InterPro" id="IPR036164">
    <property type="entry name" value="bL21-like_sf"/>
</dbReference>
<dbReference type="InterPro" id="IPR010995">
    <property type="entry name" value="DNA_repair_Rad51/TF_NusA_a-hlx"/>
</dbReference>
<dbReference type="InterPro" id="IPR001787">
    <property type="entry name" value="Ribosomal_bL21"/>
</dbReference>
<dbReference type="NCBIfam" id="TIGR00061">
    <property type="entry name" value="L21"/>
    <property type="match status" value="1"/>
</dbReference>
<dbReference type="NCBIfam" id="NF008916">
    <property type="entry name" value="PRK12278.1-4"/>
    <property type="match status" value="1"/>
</dbReference>
<dbReference type="PANTHER" id="PTHR21349">
    <property type="entry name" value="50S RIBOSOMAL PROTEIN L21"/>
    <property type="match status" value="1"/>
</dbReference>
<dbReference type="PANTHER" id="PTHR21349:SF0">
    <property type="entry name" value="LARGE RIBOSOMAL SUBUNIT PROTEIN BL21M"/>
    <property type="match status" value="1"/>
</dbReference>
<dbReference type="Pfam" id="PF14520">
    <property type="entry name" value="HHH_5"/>
    <property type="match status" value="1"/>
</dbReference>
<dbReference type="Pfam" id="PF00829">
    <property type="entry name" value="Ribosomal_L21p"/>
    <property type="match status" value="1"/>
</dbReference>
<dbReference type="SUPFAM" id="SSF141091">
    <property type="entry name" value="L21p-like"/>
    <property type="match status" value="1"/>
</dbReference>
<dbReference type="SUPFAM" id="SSF47794">
    <property type="entry name" value="Rad51 N-terminal domain-like"/>
    <property type="match status" value="1"/>
</dbReference>